<organism>
    <name type="scientific">Bacillus subtilis (strain 168)</name>
    <dbReference type="NCBI Taxonomy" id="224308"/>
    <lineage>
        <taxon>Bacteria</taxon>
        <taxon>Bacillati</taxon>
        <taxon>Bacillota</taxon>
        <taxon>Bacilli</taxon>
        <taxon>Bacillales</taxon>
        <taxon>Bacillaceae</taxon>
        <taxon>Bacillus</taxon>
    </lineage>
</organism>
<protein>
    <recommendedName>
        <fullName>Uncharacterized protein YqfQ</fullName>
    </recommendedName>
</protein>
<name>YQFQ_BACSU</name>
<reference key="1">
    <citation type="journal article" date="1996" name="Microbiology">
        <title>Systematic sequencing of the 283 kb 210 degrees-232 degrees region of the Bacillus subtilis genome containing the skin element and many sporulation genes.</title>
        <authorList>
            <person name="Mizuno M."/>
            <person name="Masuda S."/>
            <person name="Takemaru K."/>
            <person name="Hosono S."/>
            <person name="Sato T."/>
            <person name="Takeuchi M."/>
            <person name="Kobayashi Y."/>
        </authorList>
    </citation>
    <scope>NUCLEOTIDE SEQUENCE [GENOMIC DNA]</scope>
    <source>
        <strain>168 / JH642</strain>
    </source>
</reference>
<reference key="2">
    <citation type="journal article" date="1997" name="Nature">
        <title>The complete genome sequence of the Gram-positive bacterium Bacillus subtilis.</title>
        <authorList>
            <person name="Kunst F."/>
            <person name="Ogasawara N."/>
            <person name="Moszer I."/>
            <person name="Albertini A.M."/>
            <person name="Alloni G."/>
            <person name="Azevedo V."/>
            <person name="Bertero M.G."/>
            <person name="Bessieres P."/>
            <person name="Bolotin A."/>
            <person name="Borchert S."/>
            <person name="Borriss R."/>
            <person name="Boursier L."/>
            <person name="Brans A."/>
            <person name="Braun M."/>
            <person name="Brignell S.C."/>
            <person name="Bron S."/>
            <person name="Brouillet S."/>
            <person name="Bruschi C.V."/>
            <person name="Caldwell B."/>
            <person name="Capuano V."/>
            <person name="Carter N.M."/>
            <person name="Choi S.-K."/>
            <person name="Codani J.-J."/>
            <person name="Connerton I.F."/>
            <person name="Cummings N.J."/>
            <person name="Daniel R.A."/>
            <person name="Denizot F."/>
            <person name="Devine K.M."/>
            <person name="Duesterhoeft A."/>
            <person name="Ehrlich S.D."/>
            <person name="Emmerson P.T."/>
            <person name="Entian K.-D."/>
            <person name="Errington J."/>
            <person name="Fabret C."/>
            <person name="Ferrari E."/>
            <person name="Foulger D."/>
            <person name="Fritz C."/>
            <person name="Fujita M."/>
            <person name="Fujita Y."/>
            <person name="Fuma S."/>
            <person name="Galizzi A."/>
            <person name="Galleron N."/>
            <person name="Ghim S.-Y."/>
            <person name="Glaser P."/>
            <person name="Goffeau A."/>
            <person name="Golightly E.J."/>
            <person name="Grandi G."/>
            <person name="Guiseppi G."/>
            <person name="Guy B.J."/>
            <person name="Haga K."/>
            <person name="Haiech J."/>
            <person name="Harwood C.R."/>
            <person name="Henaut A."/>
            <person name="Hilbert H."/>
            <person name="Holsappel S."/>
            <person name="Hosono S."/>
            <person name="Hullo M.-F."/>
            <person name="Itaya M."/>
            <person name="Jones L.-M."/>
            <person name="Joris B."/>
            <person name="Karamata D."/>
            <person name="Kasahara Y."/>
            <person name="Klaerr-Blanchard M."/>
            <person name="Klein C."/>
            <person name="Kobayashi Y."/>
            <person name="Koetter P."/>
            <person name="Koningstein G."/>
            <person name="Krogh S."/>
            <person name="Kumano M."/>
            <person name="Kurita K."/>
            <person name="Lapidus A."/>
            <person name="Lardinois S."/>
            <person name="Lauber J."/>
            <person name="Lazarevic V."/>
            <person name="Lee S.-M."/>
            <person name="Levine A."/>
            <person name="Liu H."/>
            <person name="Masuda S."/>
            <person name="Mauel C."/>
            <person name="Medigue C."/>
            <person name="Medina N."/>
            <person name="Mellado R.P."/>
            <person name="Mizuno M."/>
            <person name="Moestl D."/>
            <person name="Nakai S."/>
            <person name="Noback M."/>
            <person name="Noone D."/>
            <person name="O'Reilly M."/>
            <person name="Ogawa K."/>
            <person name="Ogiwara A."/>
            <person name="Oudega B."/>
            <person name="Park S.-H."/>
            <person name="Parro V."/>
            <person name="Pohl T.M."/>
            <person name="Portetelle D."/>
            <person name="Porwollik S."/>
            <person name="Prescott A.M."/>
            <person name="Presecan E."/>
            <person name="Pujic P."/>
            <person name="Purnelle B."/>
            <person name="Rapoport G."/>
            <person name="Rey M."/>
            <person name="Reynolds S."/>
            <person name="Rieger M."/>
            <person name="Rivolta C."/>
            <person name="Rocha E."/>
            <person name="Roche B."/>
            <person name="Rose M."/>
            <person name="Sadaie Y."/>
            <person name="Sato T."/>
            <person name="Scanlan E."/>
            <person name="Schleich S."/>
            <person name="Schroeter R."/>
            <person name="Scoffone F."/>
            <person name="Sekiguchi J."/>
            <person name="Sekowska A."/>
            <person name="Seror S.J."/>
            <person name="Serror P."/>
            <person name="Shin B.-S."/>
            <person name="Soldo B."/>
            <person name="Sorokin A."/>
            <person name="Tacconi E."/>
            <person name="Takagi T."/>
            <person name="Takahashi H."/>
            <person name="Takemaru K."/>
            <person name="Takeuchi M."/>
            <person name="Tamakoshi A."/>
            <person name="Tanaka T."/>
            <person name="Terpstra P."/>
            <person name="Tognoni A."/>
            <person name="Tosato V."/>
            <person name="Uchiyama S."/>
            <person name="Vandenbol M."/>
            <person name="Vannier F."/>
            <person name="Vassarotti A."/>
            <person name="Viari A."/>
            <person name="Wambutt R."/>
            <person name="Wedler E."/>
            <person name="Wedler H."/>
            <person name="Weitzenegger T."/>
            <person name="Winters P."/>
            <person name="Wipat A."/>
            <person name="Yamamoto H."/>
            <person name="Yamane K."/>
            <person name="Yasumoto K."/>
            <person name="Yata K."/>
            <person name="Yoshida K."/>
            <person name="Yoshikawa H.-F."/>
            <person name="Zumstein E."/>
            <person name="Yoshikawa H."/>
            <person name="Danchin A."/>
        </authorList>
    </citation>
    <scope>NUCLEOTIDE SEQUENCE [LARGE SCALE GENOMIC DNA]</scope>
    <source>
        <strain>168</strain>
    </source>
</reference>
<keyword id="KW-1185">Reference proteome</keyword>
<sequence length="247" mass="25898">MFSPQQPMRNYPQPGPPRPMPNQRMMGRRPPNMRGPSFGAQQQGFQQAGQFLPQANAGARNGAGAGGGLKGMLSRFLPGGGGAGSAGVPGIPGAGAAASGGAGLQGIQNIANPASLSSMLGNVQKVLGMAQQVTPMIQQYGPLVRNLPAMMKLYSQLSKSDDTETEANEESEKQSVSEESSEKEKETETKTSDGNKKSKPKSSSLPKKSKTTDNKEQELKTSAPKKKEAASPAPKRTSGSSKPRLYI</sequence>
<proteinExistence type="predicted"/>
<feature type="chain" id="PRO_0000049799" description="Uncharacterized protein YqfQ">
    <location>
        <begin position="1"/>
        <end position="247"/>
    </location>
</feature>
<feature type="region of interest" description="Disordered" evidence="1">
    <location>
        <begin position="1"/>
        <end position="43"/>
    </location>
</feature>
<feature type="region of interest" description="Disordered" evidence="1">
    <location>
        <begin position="157"/>
        <end position="247"/>
    </location>
</feature>
<feature type="compositionally biased region" description="Low complexity" evidence="1">
    <location>
        <begin position="1"/>
        <end position="12"/>
    </location>
</feature>
<feature type="compositionally biased region" description="Low complexity" evidence="1">
    <location>
        <begin position="21"/>
        <end position="43"/>
    </location>
</feature>
<feature type="compositionally biased region" description="Basic and acidic residues" evidence="1">
    <location>
        <begin position="170"/>
        <end position="196"/>
    </location>
</feature>
<feature type="compositionally biased region" description="Basic and acidic residues" evidence="1">
    <location>
        <begin position="210"/>
        <end position="229"/>
    </location>
</feature>
<accession>P54474</accession>
<evidence type="ECO:0000256" key="1">
    <source>
        <dbReference type="SAM" id="MobiDB-lite"/>
    </source>
</evidence>
<gene>
    <name type="primary">yqfQ</name>
    <name type="ordered locus">BSU25150</name>
</gene>
<dbReference type="EMBL" id="D84432">
    <property type="protein sequence ID" value="BAA12494.1"/>
    <property type="molecule type" value="Genomic_DNA"/>
</dbReference>
<dbReference type="EMBL" id="AL009126">
    <property type="protein sequence ID" value="CAB14445.1"/>
    <property type="molecule type" value="Genomic_DNA"/>
</dbReference>
<dbReference type="PIR" id="C69954">
    <property type="entry name" value="C69954"/>
</dbReference>
<dbReference type="RefSeq" id="NP_390394.1">
    <property type="nucleotide sequence ID" value="NC_000964.3"/>
</dbReference>
<dbReference type="RefSeq" id="WP_003246095.1">
    <property type="nucleotide sequence ID" value="NZ_OZ025638.1"/>
</dbReference>
<dbReference type="FunCoup" id="P54474">
    <property type="interactions" value="126"/>
</dbReference>
<dbReference type="STRING" id="224308.BSU25150"/>
<dbReference type="PaxDb" id="224308-BSU25150"/>
<dbReference type="EnsemblBacteria" id="CAB14445">
    <property type="protein sequence ID" value="CAB14445"/>
    <property type="gene ID" value="BSU_25150"/>
</dbReference>
<dbReference type="GeneID" id="937910"/>
<dbReference type="KEGG" id="bsu:BSU25150"/>
<dbReference type="PATRIC" id="fig|224308.179.peg.2734"/>
<dbReference type="eggNOG" id="ENOG50336QF">
    <property type="taxonomic scope" value="Bacteria"/>
</dbReference>
<dbReference type="InParanoid" id="P54474"/>
<dbReference type="OrthoDB" id="2860117at2"/>
<dbReference type="BioCyc" id="BSUB:BSU25150-MONOMER"/>
<dbReference type="Proteomes" id="UP000001570">
    <property type="component" value="Chromosome"/>
</dbReference>
<dbReference type="InterPro" id="IPR025571">
    <property type="entry name" value="YqfQ"/>
</dbReference>
<dbReference type="Pfam" id="PF14181">
    <property type="entry name" value="YqfQ"/>
    <property type="match status" value="1"/>
</dbReference>